<name>AZOR1_RHIEC</name>
<evidence type="ECO:0000255" key="1">
    <source>
        <dbReference type="HAMAP-Rule" id="MF_01216"/>
    </source>
</evidence>
<gene>
    <name evidence="1" type="primary">azoR1</name>
    <name type="ordered locus">RHE_CH01764</name>
</gene>
<proteinExistence type="inferred from homology"/>
<reference key="1">
    <citation type="journal article" date="2006" name="Proc. Natl. Acad. Sci. U.S.A.">
        <title>The partitioned Rhizobium etli genome: genetic and metabolic redundancy in seven interacting replicons.</title>
        <authorList>
            <person name="Gonzalez V."/>
            <person name="Santamaria R.I."/>
            <person name="Bustos P."/>
            <person name="Hernandez-Gonzalez I."/>
            <person name="Medrano-Soto A."/>
            <person name="Moreno-Hagelsieb G."/>
            <person name="Janga S.C."/>
            <person name="Ramirez M.A."/>
            <person name="Jimenez-Jacinto V."/>
            <person name="Collado-Vides J."/>
            <person name="Davila G."/>
        </authorList>
    </citation>
    <scope>NUCLEOTIDE SEQUENCE [LARGE SCALE GENOMIC DNA]</scope>
    <source>
        <strain>ATCC 51251 / DSM 11541 / JCM 21823 / NBRC 15573 / CFN 42</strain>
    </source>
</reference>
<comment type="function">
    <text evidence="1">Quinone reductase that provides resistance to thiol-specific stress caused by electrophilic quinones.</text>
</comment>
<comment type="function">
    <text evidence="1">Also exhibits azoreductase activity. Catalyzes the reductive cleavage of the azo bond in aromatic azo compounds to the corresponding amines.</text>
</comment>
<comment type="catalytic activity">
    <reaction evidence="1">
        <text>2 a quinone + NADH + H(+) = 2 a 1,4-benzosemiquinone + NAD(+)</text>
        <dbReference type="Rhea" id="RHEA:65952"/>
        <dbReference type="ChEBI" id="CHEBI:15378"/>
        <dbReference type="ChEBI" id="CHEBI:57540"/>
        <dbReference type="ChEBI" id="CHEBI:57945"/>
        <dbReference type="ChEBI" id="CHEBI:132124"/>
        <dbReference type="ChEBI" id="CHEBI:134225"/>
    </reaction>
</comment>
<comment type="catalytic activity">
    <reaction evidence="1">
        <text>N,N-dimethyl-1,4-phenylenediamine + anthranilate + 2 NAD(+) = 2-(4-dimethylaminophenyl)diazenylbenzoate + 2 NADH + 2 H(+)</text>
        <dbReference type="Rhea" id="RHEA:55872"/>
        <dbReference type="ChEBI" id="CHEBI:15378"/>
        <dbReference type="ChEBI" id="CHEBI:15783"/>
        <dbReference type="ChEBI" id="CHEBI:16567"/>
        <dbReference type="ChEBI" id="CHEBI:57540"/>
        <dbReference type="ChEBI" id="CHEBI:57945"/>
        <dbReference type="ChEBI" id="CHEBI:71579"/>
        <dbReference type="EC" id="1.7.1.17"/>
    </reaction>
</comment>
<comment type="cofactor">
    <cofactor evidence="1">
        <name>FMN</name>
        <dbReference type="ChEBI" id="CHEBI:58210"/>
    </cofactor>
    <text evidence="1">Binds 1 FMN per subunit.</text>
</comment>
<comment type="subunit">
    <text evidence="1">Homodimer.</text>
</comment>
<comment type="similarity">
    <text evidence="1">Belongs to the azoreductase type 1 family.</text>
</comment>
<sequence>MSSILLLTSSPRAESLSTPIAADLAEKLKNQKPGSVVVRRDLAATPLPHIDDLFTGAIRKPAEARTAEEIAAVKTSDELVAELFAADTIVISTGLINFNIYSSLKTWIDNVARAGVTFKYTESGPVGLVTGKKVYVVLASGGVYSQGPAAPLNHAVPYLKSVLGFLGITDIETIYVEGLAFGPEAAEKAIGAAKSRVEEIALAA</sequence>
<organism>
    <name type="scientific">Rhizobium etli (strain ATCC 51251 / DSM 11541 / JCM 21823 / NBRC 15573 / CFN 42)</name>
    <dbReference type="NCBI Taxonomy" id="347834"/>
    <lineage>
        <taxon>Bacteria</taxon>
        <taxon>Pseudomonadati</taxon>
        <taxon>Pseudomonadota</taxon>
        <taxon>Alphaproteobacteria</taxon>
        <taxon>Hyphomicrobiales</taxon>
        <taxon>Rhizobiaceae</taxon>
        <taxon>Rhizobium/Agrobacterium group</taxon>
        <taxon>Rhizobium</taxon>
    </lineage>
</organism>
<dbReference type="EC" id="1.6.5.-" evidence="1"/>
<dbReference type="EC" id="1.7.1.17" evidence="1"/>
<dbReference type="EMBL" id="CP000133">
    <property type="protein sequence ID" value="ABC90559.1"/>
    <property type="molecule type" value="Genomic_DNA"/>
</dbReference>
<dbReference type="RefSeq" id="WP_011425056.1">
    <property type="nucleotide sequence ID" value="NC_007761.1"/>
</dbReference>
<dbReference type="SMR" id="Q2K9C7"/>
<dbReference type="KEGG" id="ret:RHE_CH01764"/>
<dbReference type="eggNOG" id="COG1182">
    <property type="taxonomic scope" value="Bacteria"/>
</dbReference>
<dbReference type="HOGENOM" id="CLU_088964_0_0_5"/>
<dbReference type="OrthoDB" id="9787136at2"/>
<dbReference type="Proteomes" id="UP000001936">
    <property type="component" value="Chromosome"/>
</dbReference>
<dbReference type="GO" id="GO:0009055">
    <property type="term" value="F:electron transfer activity"/>
    <property type="evidence" value="ECO:0007669"/>
    <property type="project" value="UniProtKB-UniRule"/>
</dbReference>
<dbReference type="GO" id="GO:0010181">
    <property type="term" value="F:FMN binding"/>
    <property type="evidence" value="ECO:0007669"/>
    <property type="project" value="UniProtKB-UniRule"/>
</dbReference>
<dbReference type="GO" id="GO:0016652">
    <property type="term" value="F:oxidoreductase activity, acting on NAD(P)H as acceptor"/>
    <property type="evidence" value="ECO:0007669"/>
    <property type="project" value="UniProtKB-UniRule"/>
</dbReference>
<dbReference type="GO" id="GO:0016655">
    <property type="term" value="F:oxidoreductase activity, acting on NAD(P)H, quinone or similar compound as acceptor"/>
    <property type="evidence" value="ECO:0007669"/>
    <property type="project" value="InterPro"/>
</dbReference>
<dbReference type="Gene3D" id="3.40.50.360">
    <property type="match status" value="1"/>
</dbReference>
<dbReference type="HAMAP" id="MF_01216">
    <property type="entry name" value="Azoreductase_type1"/>
    <property type="match status" value="1"/>
</dbReference>
<dbReference type="InterPro" id="IPR003680">
    <property type="entry name" value="Flavodoxin_fold"/>
</dbReference>
<dbReference type="InterPro" id="IPR029039">
    <property type="entry name" value="Flavoprotein-like_sf"/>
</dbReference>
<dbReference type="InterPro" id="IPR050104">
    <property type="entry name" value="FMN-dep_NADH:Q_OxRdtase_AzoR1"/>
</dbReference>
<dbReference type="InterPro" id="IPR023048">
    <property type="entry name" value="NADH:quinone_OxRdtase_FMN_depd"/>
</dbReference>
<dbReference type="PANTHER" id="PTHR43741">
    <property type="entry name" value="FMN-DEPENDENT NADH-AZOREDUCTASE 1"/>
    <property type="match status" value="1"/>
</dbReference>
<dbReference type="PANTHER" id="PTHR43741:SF2">
    <property type="entry name" value="FMN-DEPENDENT NADH:QUINONE OXIDOREDUCTASE"/>
    <property type="match status" value="1"/>
</dbReference>
<dbReference type="Pfam" id="PF02525">
    <property type="entry name" value="Flavodoxin_2"/>
    <property type="match status" value="1"/>
</dbReference>
<dbReference type="SUPFAM" id="SSF52218">
    <property type="entry name" value="Flavoproteins"/>
    <property type="match status" value="1"/>
</dbReference>
<protein>
    <recommendedName>
        <fullName evidence="1">FMN-dependent NADH:quinone oxidoreductase 1</fullName>
        <ecNumber evidence="1">1.6.5.-</ecNumber>
    </recommendedName>
    <alternativeName>
        <fullName evidence="1">Azo-dye reductase 1</fullName>
    </alternativeName>
    <alternativeName>
        <fullName evidence="1">FMN-dependent NADH-azo compound oxidoreductase 1</fullName>
    </alternativeName>
    <alternativeName>
        <fullName evidence="1">FMN-dependent NADH-azoreductase 1</fullName>
        <ecNumber evidence="1">1.7.1.17</ecNumber>
    </alternativeName>
</protein>
<feature type="chain" id="PRO_0000245960" description="FMN-dependent NADH:quinone oxidoreductase 1">
    <location>
        <begin position="1"/>
        <end position="204"/>
    </location>
</feature>
<feature type="binding site" evidence="1">
    <location>
        <position position="10"/>
    </location>
    <ligand>
        <name>FMN</name>
        <dbReference type="ChEBI" id="CHEBI:58210"/>
    </ligand>
</feature>
<feature type="binding site" evidence="1">
    <location>
        <begin position="15"/>
        <end position="17"/>
    </location>
    <ligand>
        <name>FMN</name>
        <dbReference type="ChEBI" id="CHEBI:58210"/>
    </ligand>
</feature>
<keyword id="KW-0285">Flavoprotein</keyword>
<keyword id="KW-0288">FMN</keyword>
<keyword id="KW-0520">NAD</keyword>
<keyword id="KW-0560">Oxidoreductase</keyword>
<keyword id="KW-1185">Reference proteome</keyword>
<accession>Q2K9C7</accession>